<evidence type="ECO:0000250" key="1"/>
<evidence type="ECO:0000255" key="2"/>
<evidence type="ECO:0000255" key="3">
    <source>
        <dbReference type="PROSITE-ProRule" id="PRU00067"/>
    </source>
</evidence>
<evidence type="ECO:0000305" key="4"/>
<keyword id="KW-0012">Acyltransferase</keyword>
<keyword id="KW-0256">Endoplasmic reticulum</keyword>
<keyword id="KW-0449">Lipoprotein</keyword>
<keyword id="KW-0472">Membrane</keyword>
<keyword id="KW-0564">Palmitate</keyword>
<keyword id="KW-1185">Reference proteome</keyword>
<keyword id="KW-0808">Transferase</keyword>
<keyword id="KW-0812">Transmembrane</keyword>
<keyword id="KW-1133">Transmembrane helix</keyword>
<feature type="chain" id="PRO_0000212985" description="Palmitoyltransferase swf1">
    <location>
        <begin position="1"/>
        <end position="379"/>
    </location>
</feature>
<feature type="topological domain" description="Lumenal" evidence="2">
    <location>
        <begin position="1"/>
        <end position="4"/>
    </location>
</feature>
<feature type="transmembrane region" description="Helical" evidence="2">
    <location>
        <begin position="5"/>
        <end position="25"/>
    </location>
</feature>
<feature type="topological domain" description="Cytoplasmic" evidence="2">
    <location>
        <begin position="26"/>
        <end position="48"/>
    </location>
</feature>
<feature type="transmembrane region" description="Helical" evidence="2">
    <location>
        <begin position="49"/>
        <end position="69"/>
    </location>
</feature>
<feature type="topological domain" description="Lumenal" evidence="2">
    <location>
        <begin position="70"/>
        <end position="76"/>
    </location>
</feature>
<feature type="transmembrane region" description="Helical" evidence="2">
    <location>
        <begin position="77"/>
        <end position="97"/>
    </location>
</feature>
<feature type="topological domain" description="Cytoplasmic" evidence="2">
    <location>
        <begin position="98"/>
        <end position="166"/>
    </location>
</feature>
<feature type="transmembrane region" description="Helical" evidence="2">
    <location>
        <begin position="167"/>
        <end position="187"/>
    </location>
</feature>
<feature type="topological domain" description="Lumenal" evidence="2">
    <location>
        <begin position="188"/>
        <end position="227"/>
    </location>
</feature>
<feature type="transmembrane region" description="Helical" evidence="2">
    <location>
        <begin position="228"/>
        <end position="248"/>
    </location>
</feature>
<feature type="topological domain" description="Cytoplasmic" evidence="2">
    <location>
        <begin position="249"/>
        <end position="379"/>
    </location>
</feature>
<feature type="domain" description="DHHC" evidence="3">
    <location>
        <begin position="123"/>
        <end position="173"/>
    </location>
</feature>
<feature type="active site" description="S-palmitoyl cysteine intermediate" evidence="1">
    <location>
        <position position="153"/>
    </location>
</feature>
<dbReference type="EC" id="2.3.1.225"/>
<dbReference type="EMBL" id="AAHF01000006">
    <property type="protein sequence ID" value="EAL88610.1"/>
    <property type="molecule type" value="Genomic_DNA"/>
</dbReference>
<dbReference type="RefSeq" id="XP_750648.1">
    <property type="nucleotide sequence ID" value="XM_745555.1"/>
</dbReference>
<dbReference type="FunCoup" id="Q4WN54">
    <property type="interactions" value="30"/>
</dbReference>
<dbReference type="STRING" id="330879.Q4WN54"/>
<dbReference type="EnsemblFungi" id="EAL88610">
    <property type="protein sequence ID" value="EAL88610"/>
    <property type="gene ID" value="AFUA_6G07570"/>
</dbReference>
<dbReference type="GeneID" id="3508719"/>
<dbReference type="KEGG" id="afm:AFUA_6G07570"/>
<dbReference type="eggNOG" id="KOG1312">
    <property type="taxonomic scope" value="Eukaryota"/>
</dbReference>
<dbReference type="HOGENOM" id="CLU_042181_2_1_1"/>
<dbReference type="InParanoid" id="Q4WN54"/>
<dbReference type="OMA" id="HIYLIWA"/>
<dbReference type="OrthoDB" id="9909019at2759"/>
<dbReference type="Proteomes" id="UP000002530">
    <property type="component" value="Chromosome 6"/>
</dbReference>
<dbReference type="GO" id="GO:0005783">
    <property type="term" value="C:endoplasmic reticulum"/>
    <property type="evidence" value="ECO:0000318"/>
    <property type="project" value="GO_Central"/>
</dbReference>
<dbReference type="GO" id="GO:0005789">
    <property type="term" value="C:endoplasmic reticulum membrane"/>
    <property type="evidence" value="ECO:0007669"/>
    <property type="project" value="UniProtKB-SubCell"/>
</dbReference>
<dbReference type="GO" id="GO:0005794">
    <property type="term" value="C:Golgi apparatus"/>
    <property type="evidence" value="ECO:0000318"/>
    <property type="project" value="GO_Central"/>
</dbReference>
<dbReference type="GO" id="GO:0019706">
    <property type="term" value="F:protein-cysteine S-palmitoyltransferase activity"/>
    <property type="evidence" value="ECO:0000318"/>
    <property type="project" value="GO_Central"/>
</dbReference>
<dbReference type="GO" id="GO:0006612">
    <property type="term" value="P:protein targeting to membrane"/>
    <property type="evidence" value="ECO:0000318"/>
    <property type="project" value="GO_Central"/>
</dbReference>
<dbReference type="InterPro" id="IPR001594">
    <property type="entry name" value="Palmitoyltrfase_DHHC"/>
</dbReference>
<dbReference type="InterPro" id="IPR039859">
    <property type="entry name" value="PFA4/ZDH16/20/ERF2-like"/>
</dbReference>
<dbReference type="PANTHER" id="PTHR22883:SF480">
    <property type="entry name" value="PALMITOYLTRANSFERASE SWF1"/>
    <property type="match status" value="1"/>
</dbReference>
<dbReference type="PANTHER" id="PTHR22883">
    <property type="entry name" value="ZINC FINGER DHHC DOMAIN CONTAINING PROTEIN"/>
    <property type="match status" value="1"/>
</dbReference>
<dbReference type="Pfam" id="PF01529">
    <property type="entry name" value="DHHC"/>
    <property type="match status" value="1"/>
</dbReference>
<dbReference type="PROSITE" id="PS50216">
    <property type="entry name" value="DHHC"/>
    <property type="match status" value="1"/>
</dbReference>
<gene>
    <name type="primary">swf1</name>
    <name type="ORF">AFUA_6G07570</name>
</gene>
<comment type="function">
    <text evidence="1">Palmitoyltransferase that targets several endosomal SNAREs. Palmitoylates the SNAREs at cysteine residues close to the cytoplasmic end of their transmembrane domain. May have a role in the cellular quality control of transmembrane domain-containing proteins (By similarity).</text>
</comment>
<comment type="catalytic activity">
    <reaction>
        <text>L-cysteinyl-[protein] + hexadecanoyl-CoA = S-hexadecanoyl-L-cysteinyl-[protein] + CoA</text>
        <dbReference type="Rhea" id="RHEA:36683"/>
        <dbReference type="Rhea" id="RHEA-COMP:10131"/>
        <dbReference type="Rhea" id="RHEA-COMP:11032"/>
        <dbReference type="ChEBI" id="CHEBI:29950"/>
        <dbReference type="ChEBI" id="CHEBI:57287"/>
        <dbReference type="ChEBI" id="CHEBI:57379"/>
        <dbReference type="ChEBI" id="CHEBI:74151"/>
        <dbReference type="EC" id="2.3.1.225"/>
    </reaction>
</comment>
<comment type="subcellular location">
    <subcellularLocation>
        <location evidence="1">Endoplasmic reticulum membrane</location>
        <topology evidence="1">Multi-pass membrane protein</topology>
    </subcellularLocation>
</comment>
<comment type="domain">
    <text evidence="1">The DHHC domain is required for palmitoyltransferase activity.</text>
</comment>
<comment type="similarity">
    <text evidence="4">Belongs to the DHHC palmitoyltransferase family. SWF1 subfamily.</text>
</comment>
<sequence length="379" mass="43580">MCYYISILIYWGADCRTVGTGPVLMYCTKTIRSYFRCRHPFFSSINSSQIFFLSLLIAGECMFIPSAWPRVSTFHRLFIPALALLPYVFLYASVVTKSYITHENHEDEMARYPYDRVIFNPGHRCRTCDFLKPARSKHCSFCKACVSRHDHHCVWLTNCVGRNNYHYFLSLLLSLSLMLAYGSWLGFSLVSQTLEGLIPSSSPLRSKSQDWTTWLNVWAIAIASDIRVGAVAMLTAMTAPLAMAFLLYHTYLIWAGMTTNESAKWSDWKEDVADGLVFKSTRSEIYGNQSHSDEDTPAQRTWPVSSNQILVITDGEPPKEGFQLCSRSNEILQKDDPQAPVDTRWTEVNSMREIDNIYDLGFWDNLREVFHMPIRRCVR</sequence>
<accession>Q4WN54</accession>
<protein>
    <recommendedName>
        <fullName>Palmitoyltransferase swf1</fullName>
        <ecNumber>2.3.1.225</ecNumber>
    </recommendedName>
</protein>
<organism>
    <name type="scientific">Aspergillus fumigatus (strain ATCC MYA-4609 / CBS 101355 / FGSC A1100 / Af293)</name>
    <name type="common">Neosartorya fumigata</name>
    <dbReference type="NCBI Taxonomy" id="330879"/>
    <lineage>
        <taxon>Eukaryota</taxon>
        <taxon>Fungi</taxon>
        <taxon>Dikarya</taxon>
        <taxon>Ascomycota</taxon>
        <taxon>Pezizomycotina</taxon>
        <taxon>Eurotiomycetes</taxon>
        <taxon>Eurotiomycetidae</taxon>
        <taxon>Eurotiales</taxon>
        <taxon>Aspergillaceae</taxon>
        <taxon>Aspergillus</taxon>
        <taxon>Aspergillus subgen. Fumigati</taxon>
    </lineage>
</organism>
<proteinExistence type="inferred from homology"/>
<reference key="1">
    <citation type="journal article" date="2005" name="Nature">
        <title>Genomic sequence of the pathogenic and allergenic filamentous fungus Aspergillus fumigatus.</title>
        <authorList>
            <person name="Nierman W.C."/>
            <person name="Pain A."/>
            <person name="Anderson M.J."/>
            <person name="Wortman J.R."/>
            <person name="Kim H.S."/>
            <person name="Arroyo J."/>
            <person name="Berriman M."/>
            <person name="Abe K."/>
            <person name="Archer D.B."/>
            <person name="Bermejo C."/>
            <person name="Bennett J.W."/>
            <person name="Bowyer P."/>
            <person name="Chen D."/>
            <person name="Collins M."/>
            <person name="Coulsen R."/>
            <person name="Davies R."/>
            <person name="Dyer P.S."/>
            <person name="Farman M.L."/>
            <person name="Fedorova N."/>
            <person name="Fedorova N.D."/>
            <person name="Feldblyum T.V."/>
            <person name="Fischer R."/>
            <person name="Fosker N."/>
            <person name="Fraser A."/>
            <person name="Garcia J.L."/>
            <person name="Garcia M.J."/>
            <person name="Goble A."/>
            <person name="Goldman G.H."/>
            <person name="Gomi K."/>
            <person name="Griffith-Jones S."/>
            <person name="Gwilliam R."/>
            <person name="Haas B.J."/>
            <person name="Haas H."/>
            <person name="Harris D.E."/>
            <person name="Horiuchi H."/>
            <person name="Huang J."/>
            <person name="Humphray S."/>
            <person name="Jimenez J."/>
            <person name="Keller N."/>
            <person name="Khouri H."/>
            <person name="Kitamoto K."/>
            <person name="Kobayashi T."/>
            <person name="Konzack S."/>
            <person name="Kulkarni R."/>
            <person name="Kumagai T."/>
            <person name="Lafton A."/>
            <person name="Latge J.-P."/>
            <person name="Li W."/>
            <person name="Lord A."/>
            <person name="Lu C."/>
            <person name="Majoros W.H."/>
            <person name="May G.S."/>
            <person name="Miller B.L."/>
            <person name="Mohamoud Y."/>
            <person name="Molina M."/>
            <person name="Monod M."/>
            <person name="Mouyna I."/>
            <person name="Mulligan S."/>
            <person name="Murphy L.D."/>
            <person name="O'Neil S."/>
            <person name="Paulsen I."/>
            <person name="Penalva M.A."/>
            <person name="Pertea M."/>
            <person name="Price C."/>
            <person name="Pritchard B.L."/>
            <person name="Quail M.A."/>
            <person name="Rabbinowitsch E."/>
            <person name="Rawlins N."/>
            <person name="Rajandream M.A."/>
            <person name="Reichard U."/>
            <person name="Renauld H."/>
            <person name="Robson G.D."/>
            <person name="Rodriguez de Cordoba S."/>
            <person name="Rodriguez-Pena J.M."/>
            <person name="Ronning C.M."/>
            <person name="Rutter S."/>
            <person name="Salzberg S.L."/>
            <person name="Sanchez M."/>
            <person name="Sanchez-Ferrero J.C."/>
            <person name="Saunders D."/>
            <person name="Seeger K."/>
            <person name="Squares R."/>
            <person name="Squares S."/>
            <person name="Takeuchi M."/>
            <person name="Tekaia F."/>
            <person name="Turner G."/>
            <person name="Vazquez de Aldana C.R."/>
            <person name="Weidman J."/>
            <person name="White O."/>
            <person name="Woodward J.R."/>
            <person name="Yu J.-H."/>
            <person name="Fraser C.M."/>
            <person name="Galagan J.E."/>
            <person name="Asai K."/>
            <person name="Machida M."/>
            <person name="Hall N."/>
            <person name="Barrell B.G."/>
            <person name="Denning D.W."/>
        </authorList>
    </citation>
    <scope>NUCLEOTIDE SEQUENCE [LARGE SCALE GENOMIC DNA]</scope>
    <source>
        <strain>ATCC MYA-4609 / CBS 101355 / FGSC A1100 / Af293</strain>
    </source>
</reference>
<name>SWF1_ASPFU</name>